<name>HBG1_PONPY</name>
<protein>
    <recommendedName>
        <fullName>Hemoglobin subunit gamma-1</fullName>
    </recommendedName>
    <alternativeName>
        <fullName>Gamma-1-globin</fullName>
    </alternativeName>
    <alternativeName>
        <fullName>Hemoglobin gamma-1 chain</fullName>
    </alternativeName>
</protein>
<sequence length="147" mass="16131">MGHFTEEDKATITSLWGKVNVEDAGGETLGRLLVVYPWTQRFFDSFGNLSSASAIMGNPKVKAHGKKVLTSLGDAIKNLDDLKGTFAQLSELHCDKLHVDPENFRLLGNVLVTVLAIHFGKEFTPEVQASWQKMVTGVASALSSRYH</sequence>
<evidence type="ECO:0000250" key="1">
    <source>
        <dbReference type="UniProtKB" id="P68871"/>
    </source>
</evidence>
<evidence type="ECO:0000250" key="2">
    <source>
        <dbReference type="UniProtKB" id="P69891"/>
    </source>
</evidence>
<evidence type="ECO:0000255" key="3">
    <source>
        <dbReference type="PROSITE-ProRule" id="PRU00238"/>
    </source>
</evidence>
<accession>P18995</accession>
<organism>
    <name type="scientific">Pongo pygmaeus</name>
    <name type="common">Bornean orangutan</name>
    <dbReference type="NCBI Taxonomy" id="9600"/>
    <lineage>
        <taxon>Eukaryota</taxon>
        <taxon>Metazoa</taxon>
        <taxon>Chordata</taxon>
        <taxon>Craniata</taxon>
        <taxon>Vertebrata</taxon>
        <taxon>Euteleostomi</taxon>
        <taxon>Mammalia</taxon>
        <taxon>Eutheria</taxon>
        <taxon>Euarchontoglires</taxon>
        <taxon>Primates</taxon>
        <taxon>Haplorrhini</taxon>
        <taxon>Catarrhini</taxon>
        <taxon>Hominidae</taxon>
        <taxon>Pongo</taxon>
    </lineage>
</organism>
<dbReference type="EMBL" id="M16208">
    <property type="protein sequence ID" value="AAA36933.1"/>
    <property type="molecule type" value="Genomic_DNA"/>
</dbReference>
<dbReference type="EMBL" id="M92296">
    <property type="protein sequence ID" value="AAA36930.1"/>
    <property type="molecule type" value="Genomic_DNA"/>
</dbReference>
<dbReference type="PIR" id="A27800">
    <property type="entry name" value="A27800"/>
</dbReference>
<dbReference type="SMR" id="P18995"/>
<dbReference type="GO" id="GO:0072562">
    <property type="term" value="C:blood microparticle"/>
    <property type="evidence" value="ECO:0007669"/>
    <property type="project" value="TreeGrafter"/>
</dbReference>
<dbReference type="GO" id="GO:0031838">
    <property type="term" value="C:haptoglobin-hemoglobin complex"/>
    <property type="evidence" value="ECO:0007669"/>
    <property type="project" value="TreeGrafter"/>
</dbReference>
<dbReference type="GO" id="GO:0005833">
    <property type="term" value="C:hemoglobin complex"/>
    <property type="evidence" value="ECO:0007669"/>
    <property type="project" value="InterPro"/>
</dbReference>
<dbReference type="GO" id="GO:0031720">
    <property type="term" value="F:haptoglobin binding"/>
    <property type="evidence" value="ECO:0007669"/>
    <property type="project" value="TreeGrafter"/>
</dbReference>
<dbReference type="GO" id="GO:0020037">
    <property type="term" value="F:heme binding"/>
    <property type="evidence" value="ECO:0007669"/>
    <property type="project" value="InterPro"/>
</dbReference>
<dbReference type="GO" id="GO:0031721">
    <property type="term" value="F:hemoglobin alpha binding"/>
    <property type="evidence" value="ECO:0007669"/>
    <property type="project" value="TreeGrafter"/>
</dbReference>
<dbReference type="GO" id="GO:0046872">
    <property type="term" value="F:metal ion binding"/>
    <property type="evidence" value="ECO:0007669"/>
    <property type="project" value="UniProtKB-KW"/>
</dbReference>
<dbReference type="GO" id="GO:0043177">
    <property type="term" value="F:organic acid binding"/>
    <property type="evidence" value="ECO:0007669"/>
    <property type="project" value="TreeGrafter"/>
</dbReference>
<dbReference type="GO" id="GO:0019825">
    <property type="term" value="F:oxygen binding"/>
    <property type="evidence" value="ECO:0007669"/>
    <property type="project" value="InterPro"/>
</dbReference>
<dbReference type="GO" id="GO:0005344">
    <property type="term" value="F:oxygen carrier activity"/>
    <property type="evidence" value="ECO:0007669"/>
    <property type="project" value="UniProtKB-KW"/>
</dbReference>
<dbReference type="GO" id="GO:0004601">
    <property type="term" value="F:peroxidase activity"/>
    <property type="evidence" value="ECO:0007669"/>
    <property type="project" value="TreeGrafter"/>
</dbReference>
<dbReference type="GO" id="GO:0042744">
    <property type="term" value="P:hydrogen peroxide catabolic process"/>
    <property type="evidence" value="ECO:0007669"/>
    <property type="project" value="TreeGrafter"/>
</dbReference>
<dbReference type="CDD" id="cd08925">
    <property type="entry name" value="Hb-beta-like"/>
    <property type="match status" value="1"/>
</dbReference>
<dbReference type="FunFam" id="1.10.490.10:FF:000001">
    <property type="entry name" value="Hemoglobin subunit beta"/>
    <property type="match status" value="1"/>
</dbReference>
<dbReference type="Gene3D" id="1.10.490.10">
    <property type="entry name" value="Globins"/>
    <property type="match status" value="1"/>
</dbReference>
<dbReference type="InterPro" id="IPR000971">
    <property type="entry name" value="Globin"/>
</dbReference>
<dbReference type="InterPro" id="IPR009050">
    <property type="entry name" value="Globin-like_sf"/>
</dbReference>
<dbReference type="InterPro" id="IPR012292">
    <property type="entry name" value="Globin/Proto"/>
</dbReference>
<dbReference type="InterPro" id="IPR002337">
    <property type="entry name" value="Hemoglobin_b"/>
</dbReference>
<dbReference type="InterPro" id="IPR050056">
    <property type="entry name" value="Hemoglobin_oxygen_transport"/>
</dbReference>
<dbReference type="PANTHER" id="PTHR11442">
    <property type="entry name" value="HEMOGLOBIN FAMILY MEMBER"/>
    <property type="match status" value="1"/>
</dbReference>
<dbReference type="PANTHER" id="PTHR11442:SF52">
    <property type="entry name" value="HEMOGLOBIN SUBUNIT GAMMA-1"/>
    <property type="match status" value="1"/>
</dbReference>
<dbReference type="Pfam" id="PF00042">
    <property type="entry name" value="Globin"/>
    <property type="match status" value="1"/>
</dbReference>
<dbReference type="PRINTS" id="PR00814">
    <property type="entry name" value="BETAHAEM"/>
</dbReference>
<dbReference type="SUPFAM" id="SSF46458">
    <property type="entry name" value="Globin-like"/>
    <property type="match status" value="1"/>
</dbReference>
<dbReference type="PROSITE" id="PS01033">
    <property type="entry name" value="GLOBIN"/>
    <property type="match status" value="1"/>
</dbReference>
<gene>
    <name type="primary">HBG1</name>
</gene>
<proteinExistence type="evidence at transcript level"/>
<reference key="1">
    <citation type="journal article" date="1987" name="J. Biol. Chem.">
        <title>Orangutan fetal globin genes. Nucleotide sequence reveal multiple gene conversions during hominid phylogeny.</title>
        <authorList>
            <person name="Slightom J.L."/>
            <person name="Theisen T.W."/>
            <person name="Koop B.F."/>
            <person name="Goodman M."/>
        </authorList>
    </citation>
    <scope>NUCLEOTIDE SEQUENCE [GENOMIC DNA]</scope>
</reference>
<reference key="2">
    <citation type="journal article" date="1992" name="Mol. Phylogenet. Evol.">
        <title>Reexamination of the African hominoid trichotomy with additional sequences from the primate beta-globin gene cluster.</title>
        <authorList>
            <person name="Bailey W.J."/>
            <person name="Hayasaka K."/>
            <person name="Skinner C.G."/>
            <person name="Kehoe S."/>
            <person name="Sieu L.C."/>
            <person name="Slightom J.L."/>
            <person name="Goodman M."/>
        </authorList>
    </citation>
    <scope>NUCLEOTIDE SEQUENCE [GENOMIC DNA]</scope>
</reference>
<keyword id="KW-0007">Acetylation</keyword>
<keyword id="KW-0349">Heme</keyword>
<keyword id="KW-0408">Iron</keyword>
<keyword id="KW-0479">Metal-binding</keyword>
<keyword id="KW-0561">Oxygen transport</keyword>
<keyword id="KW-0597">Phosphoprotein</keyword>
<keyword id="KW-0702">S-nitrosylation</keyword>
<keyword id="KW-0813">Transport</keyword>
<comment type="function">
    <text evidence="2">Gamma chains make up the fetal hemoglobin F, in combination with alpha chains.</text>
</comment>
<comment type="subunit">
    <text evidence="2">Heterotetramer of two alpha chains and two gamma chains in fetal hemoglobin (Hb F).</text>
</comment>
<comment type="tissue specificity">
    <text>Red blood cells.</text>
</comment>
<comment type="similarity">
    <text evidence="3">Belongs to the globin family.</text>
</comment>
<feature type="initiator methionine" description="Removed" evidence="2">
    <location>
        <position position="1"/>
    </location>
</feature>
<feature type="chain" id="PRO_0000053265" description="Hemoglobin subunit gamma-1">
    <location>
        <begin position="2"/>
        <end position="147"/>
    </location>
</feature>
<feature type="domain" description="Globin" evidence="3">
    <location>
        <begin position="3"/>
        <end position="147"/>
    </location>
</feature>
<feature type="binding site" description="distal binding residue" evidence="3">
    <location>
        <position position="64"/>
    </location>
    <ligand>
        <name>heme b</name>
        <dbReference type="ChEBI" id="CHEBI:60344"/>
    </ligand>
    <ligandPart>
        <name>Fe</name>
        <dbReference type="ChEBI" id="CHEBI:18248"/>
    </ligandPart>
</feature>
<feature type="binding site" description="proximal binding residue" evidence="3">
    <location>
        <position position="93"/>
    </location>
    <ligand>
        <name>heme b</name>
        <dbReference type="ChEBI" id="CHEBI:60344"/>
    </ligand>
    <ligandPart>
        <name>Fe</name>
        <dbReference type="ChEBI" id="CHEBI:18248"/>
    </ligandPart>
</feature>
<feature type="modified residue" description="N-acetylglycine" evidence="2">
    <location>
        <position position="2"/>
    </location>
</feature>
<feature type="modified residue" description="Phosphothreonine" evidence="1">
    <location>
        <position position="13"/>
    </location>
</feature>
<feature type="modified residue" description="Phosphoserine" evidence="2">
    <location>
        <position position="45"/>
    </location>
</feature>
<feature type="modified residue" description="Phosphoserine" evidence="2">
    <location>
        <position position="51"/>
    </location>
</feature>
<feature type="modified residue" description="Phosphoserine" evidence="2">
    <location>
        <position position="53"/>
    </location>
</feature>
<feature type="modified residue" description="N6-acetyllysine" evidence="1">
    <location>
        <position position="60"/>
    </location>
</feature>
<feature type="modified residue" description="N6-acetyllysine" evidence="1">
    <location>
        <position position="83"/>
    </location>
</feature>
<feature type="modified residue" description="S-nitrosocysteine" evidence="1">
    <location>
        <position position="94"/>
    </location>
</feature>
<feature type="modified residue" description="Phosphoserine" evidence="2">
    <location>
        <position position="140"/>
    </location>
</feature>